<evidence type="ECO:0000250" key="1">
    <source>
        <dbReference type="UniProtKB" id="Q69CK0"/>
    </source>
</evidence>
<evidence type="ECO:0000305" key="2"/>
<evidence type="ECO:0000305" key="3">
    <source>
    </source>
</evidence>
<feature type="signal peptide" evidence="1">
    <location>
        <begin position="1"/>
        <end position="21"/>
    </location>
</feature>
<feature type="chain" id="PRO_5000093332" description="Beta-cardiotoxin CTX15">
    <location>
        <begin position="22"/>
        <end position="84"/>
    </location>
</feature>
<feature type="disulfide bond" evidence="1">
    <location>
        <begin position="24"/>
        <end position="43"/>
    </location>
</feature>
<feature type="disulfide bond" evidence="1">
    <location>
        <begin position="36"/>
        <end position="61"/>
    </location>
</feature>
<feature type="disulfide bond" evidence="1">
    <location>
        <begin position="65"/>
        <end position="76"/>
    </location>
</feature>
<feature type="disulfide bond" evidence="1">
    <location>
        <begin position="77"/>
        <end position="82"/>
    </location>
</feature>
<protein>
    <recommendedName>
        <fullName>Beta-cardiotoxin CTX15</fullName>
    </recommendedName>
    <alternativeName>
        <fullName>OH-84</fullName>
    </alternativeName>
</protein>
<reference key="1">
    <citation type="journal article" date="2004" name="Toxicon">
        <title>Cloning and purification of alpha-neurotoxins from king cobra (Ophiophagus hannah).</title>
        <authorList>
            <person name="He Y.-Y."/>
            <person name="Lee W.-H."/>
            <person name="Zhang Y."/>
        </authorList>
    </citation>
    <scope>NUCLEOTIDE SEQUENCE [MRNA]</scope>
    <source>
        <tissue>Venom gland</tissue>
    </source>
</reference>
<reference key="2">
    <citation type="journal article" date="2006" name="Biochem. J.">
        <title>Novel genes encoding six kinds of three-finger toxins in Ophiophagus hannah (king cobra) and function characterization of two recombinant long-chain neurotoxins.</title>
        <authorList>
            <person name="Li J."/>
            <person name="Zhang H."/>
            <person name="Liu J."/>
            <person name="Xu K."/>
        </authorList>
    </citation>
    <scope>NUCLEOTIDE SEQUENCE [MRNA]</scope>
    <source>
        <tissue>Venom gland</tissue>
    </source>
</reference>
<reference key="3">
    <citation type="journal article" date="2013" name="Proc. Natl. Acad. Sci. U.S.A.">
        <title>The king cobra genome reveals dynamic gene evolution and adaptation in the snake venom system.</title>
        <authorList>
            <person name="Vonk F.J."/>
            <person name="Casewell N.R."/>
            <person name="Henkel C.V."/>
            <person name="Heimberg A.M."/>
            <person name="Jansen H.J."/>
            <person name="McCleary R.J."/>
            <person name="Kerkkamp H.M."/>
            <person name="Vos R.A."/>
            <person name="Guerreiro I."/>
            <person name="Calvete J.J."/>
            <person name="Wuster W."/>
            <person name="Woods A.E."/>
            <person name="Logan J.M."/>
            <person name="Harrison R.A."/>
            <person name="Castoe T.A."/>
            <person name="de Koning A.P."/>
            <person name="Pollock D.D."/>
            <person name="Yandell M."/>
            <person name="Calderon D."/>
            <person name="Renjifo C."/>
            <person name="Currier R.B."/>
            <person name="Salgado D."/>
            <person name="Pla D."/>
            <person name="Sanz L."/>
            <person name="Hyder A.S."/>
            <person name="Ribeiro J.M."/>
            <person name="Arntzen J.W."/>
            <person name="van den Thillart G.E."/>
            <person name="Boetzer M."/>
            <person name="Pirovano W."/>
            <person name="Dirks R.P."/>
            <person name="Spaink H.P."/>
            <person name="Duboule D."/>
            <person name="McGlinn E."/>
            <person name="Kini R.M."/>
            <person name="Richardson M.K."/>
        </authorList>
    </citation>
    <scope>IDENTIFICATION BY MASS SPECTROMETRY</scope>
    <scope>SUBCELLULAR LOCATION</scope>
    <source>
        <tissue>Venom</tissue>
    </source>
</reference>
<keyword id="KW-0123">Cardiotoxin</keyword>
<keyword id="KW-1015">Disulfide bond</keyword>
<keyword id="KW-1213">G-protein coupled receptor impairing toxin</keyword>
<keyword id="KW-0964">Secreted</keyword>
<keyword id="KW-0732">Signal</keyword>
<keyword id="KW-0800">Toxin</keyword>
<accession>Q53B46</accession>
<proteinExistence type="evidence at protein level"/>
<dbReference type="EMBL" id="AY596940">
    <property type="protein sequence ID" value="AAT97262.1"/>
    <property type="molecule type" value="mRNA"/>
</dbReference>
<dbReference type="EMBL" id="DQ273579">
    <property type="protein sequence ID" value="ABB83633.1"/>
    <property type="molecule type" value="mRNA"/>
</dbReference>
<dbReference type="SMR" id="Q53B46"/>
<dbReference type="TopDownProteomics" id="Q53B46"/>
<dbReference type="GO" id="GO:0005576">
    <property type="term" value="C:extracellular region"/>
    <property type="evidence" value="ECO:0007669"/>
    <property type="project" value="UniProtKB-SubCell"/>
</dbReference>
<dbReference type="GO" id="GO:0090729">
    <property type="term" value="F:toxin activity"/>
    <property type="evidence" value="ECO:0007669"/>
    <property type="project" value="UniProtKB-KW"/>
</dbReference>
<dbReference type="CDD" id="cd00206">
    <property type="entry name" value="TFP_snake_toxin"/>
    <property type="match status" value="1"/>
</dbReference>
<dbReference type="FunFam" id="2.10.60.10:FF:000024">
    <property type="entry name" value="Cytotoxin 1"/>
    <property type="match status" value="1"/>
</dbReference>
<dbReference type="Gene3D" id="2.10.60.10">
    <property type="entry name" value="CD59"/>
    <property type="match status" value="1"/>
</dbReference>
<dbReference type="InterPro" id="IPR003572">
    <property type="entry name" value="Cytotoxin_Cobra"/>
</dbReference>
<dbReference type="InterPro" id="IPR003571">
    <property type="entry name" value="Snake_3FTx"/>
</dbReference>
<dbReference type="InterPro" id="IPR045860">
    <property type="entry name" value="Snake_toxin-like_sf"/>
</dbReference>
<dbReference type="InterPro" id="IPR018354">
    <property type="entry name" value="Snake_toxin_con_site"/>
</dbReference>
<dbReference type="InterPro" id="IPR054131">
    <property type="entry name" value="Toxin_cobra-type"/>
</dbReference>
<dbReference type="Pfam" id="PF21947">
    <property type="entry name" value="Toxin_cobra-type"/>
    <property type="match status" value="1"/>
</dbReference>
<dbReference type="PRINTS" id="PR00282">
    <property type="entry name" value="CYTOTOXIN"/>
</dbReference>
<dbReference type="SUPFAM" id="SSF57302">
    <property type="entry name" value="Snake toxin-like"/>
    <property type="match status" value="1"/>
</dbReference>
<dbReference type="PROSITE" id="PS00272">
    <property type="entry name" value="SNAKE_TOXIN"/>
    <property type="match status" value="1"/>
</dbReference>
<name>3SDC5_OPHHA</name>
<comment type="function">
    <text evidence="1">Acts as a beta-blocker by binding to beta-1 and beta-2 adrenergic receptors (ADRB1 and ADRB2). It dose-dependently decreases the heart rate (bradycardia), whereas conventional cardiotoxins increases it. At 100 mg/kg, intraperitoneal injection into mice provokes labored breathing, impaired locomotion, lack of response to external stimuli, and death (after 30 minutes).</text>
</comment>
<comment type="subcellular location">
    <subcellularLocation>
        <location evidence="3">Secreted</location>
    </subcellularLocation>
</comment>
<comment type="tissue specificity">
    <text evidence="3">Expressed by the venom gland.</text>
</comment>
<comment type="miscellaneous">
    <text evidence="1">Negative results: does not affect blood coagulation and does not show significant hemolytic activity.</text>
</comment>
<comment type="miscellaneous">
    <text evidence="2">Is classified as a P-type cytotoxin, since a proline residue stands at position 52 (Pro-31 in standard classification).</text>
</comment>
<comment type="similarity">
    <text evidence="2">Belongs to the three-finger toxin family. Short-chain subfamily. Aminergic toxin sub-subfamily.</text>
</comment>
<organism>
    <name type="scientific">Ophiophagus hannah</name>
    <name type="common">King cobra</name>
    <name type="synonym">Naja hannah</name>
    <dbReference type="NCBI Taxonomy" id="8665"/>
    <lineage>
        <taxon>Eukaryota</taxon>
        <taxon>Metazoa</taxon>
        <taxon>Chordata</taxon>
        <taxon>Craniata</taxon>
        <taxon>Vertebrata</taxon>
        <taxon>Euteleostomi</taxon>
        <taxon>Lepidosauria</taxon>
        <taxon>Squamata</taxon>
        <taxon>Bifurcata</taxon>
        <taxon>Unidentata</taxon>
        <taxon>Episquamata</taxon>
        <taxon>Toxicofera</taxon>
        <taxon>Serpentes</taxon>
        <taxon>Colubroidea</taxon>
        <taxon>Elapidae</taxon>
        <taxon>Elapinae</taxon>
        <taxon>Ophiophagus</taxon>
    </lineage>
</organism>
<sequence>MKTLLLTLVVVTIVCLDLGYTRKCLNTPLPLIYKTCPIGQDKCIKMTIKKLPSKYDVIRGCIDICPKSSADVEVLCCDTNKCNK</sequence>